<gene>
    <name type="primary">Ift74</name>
    <name type="synonym">Ccdc2</name>
    <name type="synonym">Cmg1</name>
</gene>
<dbReference type="EMBL" id="AK006492">
    <property type="protein sequence ID" value="BAB24617.1"/>
    <property type="status" value="ALT_INIT"/>
    <property type="molecule type" value="mRNA"/>
</dbReference>
<dbReference type="EMBL" id="AK011690">
    <property type="protein sequence ID" value="BAB27780.1"/>
    <property type="molecule type" value="mRNA"/>
</dbReference>
<dbReference type="EMBL" id="AK014770">
    <property type="protein sequence ID" value="BAB29542.3"/>
    <property type="molecule type" value="mRNA"/>
</dbReference>
<dbReference type="EMBL" id="AK053369">
    <property type="protein sequence ID" value="BAC35365.1"/>
    <property type="molecule type" value="mRNA"/>
</dbReference>
<dbReference type="EMBL" id="AL732597">
    <property type="status" value="NOT_ANNOTATED_CDS"/>
    <property type="molecule type" value="Genomic_DNA"/>
</dbReference>
<dbReference type="EMBL" id="AL772277">
    <property type="status" value="NOT_ANNOTATED_CDS"/>
    <property type="molecule type" value="Genomic_DNA"/>
</dbReference>
<dbReference type="CCDS" id="CCDS51232.1"/>
<dbReference type="RefSeq" id="NP_001277497.1">
    <property type="nucleotide sequence ID" value="NM_001290568.1"/>
</dbReference>
<dbReference type="RefSeq" id="NP_080595.2">
    <property type="nucleotide sequence ID" value="NM_026319.3"/>
</dbReference>
<dbReference type="RefSeq" id="XP_006503387.1">
    <property type="nucleotide sequence ID" value="XM_006503324.5"/>
</dbReference>
<dbReference type="RefSeq" id="XP_006503389.1">
    <property type="nucleotide sequence ID" value="XM_006503326.2"/>
</dbReference>
<dbReference type="RefSeq" id="XP_011238899.1">
    <property type="nucleotide sequence ID" value="XM_011240597.2"/>
</dbReference>
<dbReference type="RefSeq" id="XP_030109587.1">
    <property type="nucleotide sequence ID" value="XM_030253727.2"/>
</dbReference>
<dbReference type="SMR" id="Q8BKE9"/>
<dbReference type="BioGRID" id="212373">
    <property type="interactions" value="2"/>
</dbReference>
<dbReference type="ComplexPortal" id="CPX-5028">
    <property type="entry name" value="Intraflagellar transport complex B"/>
</dbReference>
<dbReference type="FunCoup" id="Q8BKE9">
    <property type="interactions" value="1760"/>
</dbReference>
<dbReference type="STRING" id="10090.ENSMUSP00000030311"/>
<dbReference type="iPTMnet" id="Q8BKE9"/>
<dbReference type="PhosphoSitePlus" id="Q8BKE9"/>
<dbReference type="PaxDb" id="10090-ENSMUSP00000030311"/>
<dbReference type="ProteomicsDB" id="267286"/>
<dbReference type="Pumba" id="Q8BKE9"/>
<dbReference type="Antibodypedia" id="5487">
    <property type="antibodies" value="196 antibodies from 31 providers"/>
</dbReference>
<dbReference type="DNASU" id="67694"/>
<dbReference type="Ensembl" id="ENSMUST00000030311.11">
    <property type="protein sequence ID" value="ENSMUSP00000030311.5"/>
    <property type="gene ID" value="ENSMUSG00000028576.13"/>
</dbReference>
<dbReference type="GeneID" id="67694"/>
<dbReference type="KEGG" id="mmu:67694"/>
<dbReference type="UCSC" id="uc008tsg.2">
    <property type="organism name" value="mouse"/>
</dbReference>
<dbReference type="AGR" id="MGI:1914944"/>
<dbReference type="CTD" id="80173"/>
<dbReference type="MGI" id="MGI:1914944">
    <property type="gene designation" value="Ift74"/>
</dbReference>
<dbReference type="VEuPathDB" id="HostDB:ENSMUSG00000028576"/>
<dbReference type="eggNOG" id="ENOG502QS4E">
    <property type="taxonomic scope" value="Eukaryota"/>
</dbReference>
<dbReference type="GeneTree" id="ENSGT00390000007109"/>
<dbReference type="HOGENOM" id="CLU_027673_2_0_1"/>
<dbReference type="InParanoid" id="Q8BKE9"/>
<dbReference type="OMA" id="RYWEELM"/>
<dbReference type="OrthoDB" id="444379at2759"/>
<dbReference type="PhylomeDB" id="Q8BKE9"/>
<dbReference type="TreeFam" id="TF318352"/>
<dbReference type="Reactome" id="R-MMU-5620924">
    <property type="pathway name" value="Intraflagellar transport"/>
</dbReference>
<dbReference type="BioGRID-ORCS" id="67694">
    <property type="hits" value="4 hits in 77 CRISPR screens"/>
</dbReference>
<dbReference type="ChiTaRS" id="Ift74">
    <property type="organism name" value="mouse"/>
</dbReference>
<dbReference type="PRO" id="PR:Q8BKE9"/>
<dbReference type="Proteomes" id="UP000000589">
    <property type="component" value="Chromosome 4"/>
</dbReference>
<dbReference type="RNAct" id="Q8BKE9">
    <property type="molecule type" value="protein"/>
</dbReference>
<dbReference type="Bgee" id="ENSMUSG00000028576">
    <property type="expression patterns" value="Expressed in seminiferous tubule of testis and 253 other cell types or tissues"/>
</dbReference>
<dbReference type="ExpressionAtlas" id="Q8BKE9">
    <property type="expression patterns" value="baseline and differential"/>
</dbReference>
<dbReference type="GO" id="GO:0001669">
    <property type="term" value="C:acrosomal vesicle"/>
    <property type="evidence" value="ECO:0007669"/>
    <property type="project" value="UniProtKB-SubCell"/>
</dbReference>
<dbReference type="GO" id="GO:0005813">
    <property type="term" value="C:centrosome"/>
    <property type="evidence" value="ECO:0000314"/>
    <property type="project" value="MGI"/>
</dbReference>
<dbReference type="GO" id="GO:0005929">
    <property type="term" value="C:cilium"/>
    <property type="evidence" value="ECO:0000314"/>
    <property type="project" value="MGI"/>
</dbReference>
<dbReference type="GO" id="GO:0030992">
    <property type="term" value="C:intraciliary transport particle B"/>
    <property type="evidence" value="ECO:0000314"/>
    <property type="project" value="UniProtKB"/>
</dbReference>
<dbReference type="GO" id="GO:0031514">
    <property type="term" value="C:motile cilium"/>
    <property type="evidence" value="ECO:0007669"/>
    <property type="project" value="UniProtKB-SubCell"/>
</dbReference>
<dbReference type="GO" id="GO:0005634">
    <property type="term" value="C:nucleus"/>
    <property type="evidence" value="ECO:0000314"/>
    <property type="project" value="MGI"/>
</dbReference>
<dbReference type="GO" id="GO:0048487">
    <property type="term" value="F:beta-tubulin binding"/>
    <property type="evidence" value="ECO:0000250"/>
    <property type="project" value="UniProtKB"/>
</dbReference>
<dbReference type="GO" id="GO:0003682">
    <property type="term" value="F:chromatin binding"/>
    <property type="evidence" value="ECO:0000314"/>
    <property type="project" value="MGI"/>
</dbReference>
<dbReference type="GO" id="GO:0060271">
    <property type="term" value="P:cilium assembly"/>
    <property type="evidence" value="ECO:0000250"/>
    <property type="project" value="UniProtKB"/>
</dbReference>
<dbReference type="GO" id="GO:0007368">
    <property type="term" value="P:determination of left/right symmetry"/>
    <property type="evidence" value="ECO:0000315"/>
    <property type="project" value="MGI"/>
</dbReference>
<dbReference type="GO" id="GO:0008544">
    <property type="term" value="P:epidermis development"/>
    <property type="evidence" value="ECO:0000315"/>
    <property type="project" value="MGI"/>
</dbReference>
<dbReference type="GO" id="GO:0007507">
    <property type="term" value="P:heart development"/>
    <property type="evidence" value="ECO:0000315"/>
    <property type="project" value="MGI"/>
</dbReference>
<dbReference type="GO" id="GO:0035720">
    <property type="term" value="P:intraciliary anterograde transport"/>
    <property type="evidence" value="ECO:0000303"/>
    <property type="project" value="ComplexPortal"/>
</dbReference>
<dbReference type="GO" id="GO:0042073">
    <property type="term" value="P:intraciliary transport"/>
    <property type="evidence" value="ECO:0000305"/>
    <property type="project" value="MGI"/>
</dbReference>
<dbReference type="GO" id="GO:0035735">
    <property type="term" value="P:intraciliary transport involved in cilium assembly"/>
    <property type="evidence" value="ECO:0000250"/>
    <property type="project" value="UniProtKB"/>
</dbReference>
<dbReference type="GO" id="GO:0003334">
    <property type="term" value="P:keratinocyte development"/>
    <property type="evidence" value="ECO:0000315"/>
    <property type="project" value="MGI"/>
</dbReference>
<dbReference type="GO" id="GO:0043616">
    <property type="term" value="P:keratinocyte proliferation"/>
    <property type="evidence" value="ECO:0000315"/>
    <property type="project" value="MGI"/>
</dbReference>
<dbReference type="GO" id="GO:0050680">
    <property type="term" value="P:negative regulation of epithelial cell proliferation"/>
    <property type="evidence" value="ECO:0000315"/>
    <property type="project" value="MGI"/>
</dbReference>
<dbReference type="GO" id="GO:0010839">
    <property type="term" value="P:negative regulation of keratinocyte proliferation"/>
    <property type="evidence" value="ECO:0000315"/>
    <property type="project" value="MGI"/>
</dbReference>
<dbReference type="GO" id="GO:1905515">
    <property type="term" value="P:non-motile cilium assembly"/>
    <property type="evidence" value="ECO:0000315"/>
    <property type="project" value="MGI"/>
</dbReference>
<dbReference type="GO" id="GO:0007219">
    <property type="term" value="P:Notch signaling pathway"/>
    <property type="evidence" value="ECO:0000315"/>
    <property type="project" value="MGI"/>
</dbReference>
<dbReference type="GO" id="GO:0033630">
    <property type="term" value="P:positive regulation of cell adhesion mediated by integrin"/>
    <property type="evidence" value="ECO:0000315"/>
    <property type="project" value="MGI"/>
</dbReference>
<dbReference type="GO" id="GO:0045944">
    <property type="term" value="P:positive regulation of transcription by RNA polymerase II"/>
    <property type="evidence" value="ECO:0000314"/>
    <property type="project" value="MGI"/>
</dbReference>
<dbReference type="FunFam" id="1.10.287.1490:FF:000012">
    <property type="entry name" value="intraflagellar transport protein 74 homolog"/>
    <property type="match status" value="1"/>
</dbReference>
<dbReference type="Gene3D" id="1.10.287.1490">
    <property type="match status" value="1"/>
</dbReference>
<dbReference type="InterPro" id="IPR029602">
    <property type="entry name" value="IFT74"/>
</dbReference>
<dbReference type="PANTHER" id="PTHR31432">
    <property type="entry name" value="INTRAFLAGELLAR TRANSPORT PROTEIN 74 HOMOLOG"/>
    <property type="match status" value="1"/>
</dbReference>
<dbReference type="PANTHER" id="PTHR31432:SF0">
    <property type="entry name" value="INTRAFLAGELLAR TRANSPORT PROTEIN 74 HOMOLOG"/>
    <property type="match status" value="1"/>
</dbReference>
<organism>
    <name type="scientific">Mus musculus</name>
    <name type="common">Mouse</name>
    <dbReference type="NCBI Taxonomy" id="10090"/>
    <lineage>
        <taxon>Eukaryota</taxon>
        <taxon>Metazoa</taxon>
        <taxon>Chordata</taxon>
        <taxon>Craniata</taxon>
        <taxon>Vertebrata</taxon>
        <taxon>Euteleostomi</taxon>
        <taxon>Mammalia</taxon>
        <taxon>Eutheria</taxon>
        <taxon>Euarchontoglires</taxon>
        <taxon>Glires</taxon>
        <taxon>Rodentia</taxon>
        <taxon>Myomorpha</taxon>
        <taxon>Muroidea</taxon>
        <taxon>Muridae</taxon>
        <taxon>Murinae</taxon>
        <taxon>Mus</taxon>
        <taxon>Mus</taxon>
    </lineage>
</organism>
<name>IFT74_MOUSE</name>
<comment type="function">
    <text evidence="2 7">Component of the intraflagellar transport (IFT) complex B: together with IFT81, forms a tubulin-binding module that specifically mediates transport of tubulin within the cilium. Binds beta-tubulin via its basic region. Required for ciliogenesis (By similarity). Essential for flagellogenesis during spermatogenesis (PubMed:31004481).</text>
</comment>
<comment type="subunit">
    <text evidence="2 5 6">Component of the IFT complex B, at least composed of IFT20, IFT22, IFT25, IFT27, IFT46, IFT52, TRAF3IP1/IFT54, IFT57, IFT74, IFT80, IFT81, and IFT88 (PubMed:16775004, PubMed:23810713). Interacts with IFT81; the interaction is direct: within the IFT complex B, IFT74 and IFT81 mediate the transport of tubulin within the cilium. Interacts (via basic region) with beta-tubulin (via acidic region); interaction is direct. Interacts with ARL13B and IFT88. Interacts (via the IFT74/IFT81 heterodimer) with RABL2B (By similarity). Interacts with IFT57 and IFT70B (PubMed:23810713).</text>
</comment>
<comment type="subcellular location">
    <subcellularLocation>
        <location evidence="5">Cell projection</location>
        <location evidence="5">Cilium</location>
    </subcellularLocation>
    <subcellularLocation>
        <location evidence="2">Cytoplasmic vesicle</location>
    </subcellularLocation>
    <subcellularLocation>
        <location evidence="7">Cell projection</location>
        <location evidence="7">Cilium</location>
        <location evidence="7">Flagellum</location>
    </subcellularLocation>
    <subcellularLocation>
        <location evidence="7">Cytoplasmic vesicle</location>
        <location evidence="7">Secretory vesicle</location>
        <location evidence="7">Acrosome</location>
    </subcellularLocation>
    <text evidence="7">In male germ cells, strongly expressed in the vesicles of spermatocytes and round spermatids and also in the acrosome and centrosome regions of elongating spermatids and in developing sperm tails.</text>
</comment>
<comment type="tissue specificity">
    <text evidence="7">Predominantly expressed in testis, but also detected in other organs containing cilia-bearing cells, including lung, brain and kidney (at protein level).</text>
</comment>
<comment type="developmental stage">
    <text evidence="7">In testis, expression starts at day 12 and strongly increases on day 20 and thereafter, temporally correlating with the first wave of spermatogenesis.</text>
</comment>
<comment type="similarity">
    <text evidence="8">Belongs to the IFT74 family.</text>
</comment>
<comment type="sequence caution" evidence="8">
    <conflict type="erroneous initiation">
        <sequence resource="EMBL-CDS" id="BAB24617"/>
    </conflict>
    <text>Truncated N-terminus.</text>
</comment>
<proteinExistence type="evidence at protein level"/>
<protein>
    <recommendedName>
        <fullName>Intraflagellar transport protein 74 homolog</fullName>
    </recommendedName>
    <alternativeName>
        <fullName>Capillary morphogenesis gene 1 protein</fullName>
        <shortName>CMG-1</shortName>
    </alternativeName>
    <alternativeName>
        <fullName>Coiled-coil domain-containing protein 2</fullName>
    </alternativeName>
</protein>
<accession>Q8BKE9</accession>
<accession>B1AWG2</accession>
<accession>Q80ZI3</accession>
<accession>Q9CSY1</accession>
<accession>Q9CUS0</accession>
<accession>Q9D9T5</accession>
<evidence type="ECO:0000250" key="1"/>
<evidence type="ECO:0000250" key="2">
    <source>
        <dbReference type="UniProtKB" id="Q96LB3"/>
    </source>
</evidence>
<evidence type="ECO:0000255" key="3"/>
<evidence type="ECO:0000256" key="4">
    <source>
        <dbReference type="SAM" id="MobiDB-lite"/>
    </source>
</evidence>
<evidence type="ECO:0000269" key="5">
    <source>
    </source>
</evidence>
<evidence type="ECO:0000269" key="6">
    <source>
    </source>
</evidence>
<evidence type="ECO:0000269" key="7">
    <source>
    </source>
</evidence>
<evidence type="ECO:0000305" key="8"/>
<evidence type="ECO:0007744" key="9">
    <source>
    </source>
</evidence>
<evidence type="ECO:0007744" key="10">
    <source>
    </source>
</evidence>
<feature type="chain" id="PRO_0000084170" description="Intraflagellar transport protein 74 homolog">
    <location>
        <begin position="1"/>
        <end position="600"/>
    </location>
</feature>
<feature type="region of interest" description="Basic region" evidence="1">
    <location>
        <begin position="1"/>
        <end position="90"/>
    </location>
</feature>
<feature type="region of interest" description="Disordered" evidence="4">
    <location>
        <begin position="1"/>
        <end position="64"/>
    </location>
</feature>
<feature type="coiled-coil region" evidence="3">
    <location>
        <begin position="97"/>
        <end position="390"/>
    </location>
</feature>
<feature type="compositionally biased region" description="Low complexity" evidence="4">
    <location>
        <begin position="22"/>
        <end position="33"/>
    </location>
</feature>
<feature type="compositionally biased region" description="Gly residues" evidence="4">
    <location>
        <begin position="50"/>
        <end position="59"/>
    </location>
</feature>
<feature type="modified residue" description="Omega-N-methylarginine" evidence="10">
    <location>
        <position position="51"/>
    </location>
</feature>
<feature type="modified residue" description="Phosphothreonine" evidence="9">
    <location>
        <position position="73"/>
    </location>
</feature>
<keyword id="KW-0966">Cell projection</keyword>
<keyword id="KW-0969">Cilium</keyword>
<keyword id="KW-0970">Cilium biogenesis/degradation</keyword>
<keyword id="KW-0175">Coiled coil</keyword>
<keyword id="KW-0968">Cytoplasmic vesicle</keyword>
<keyword id="KW-0217">Developmental protein</keyword>
<keyword id="KW-0282">Flagellum</keyword>
<keyword id="KW-0488">Methylation</keyword>
<keyword id="KW-0597">Phosphoprotein</keyword>
<keyword id="KW-1185">Reference proteome</keyword>
<reference key="1">
    <citation type="journal article" date="2005" name="Science">
        <title>The transcriptional landscape of the mammalian genome.</title>
        <authorList>
            <person name="Carninci P."/>
            <person name="Kasukawa T."/>
            <person name="Katayama S."/>
            <person name="Gough J."/>
            <person name="Frith M.C."/>
            <person name="Maeda N."/>
            <person name="Oyama R."/>
            <person name="Ravasi T."/>
            <person name="Lenhard B."/>
            <person name="Wells C."/>
            <person name="Kodzius R."/>
            <person name="Shimokawa K."/>
            <person name="Bajic V.B."/>
            <person name="Brenner S.E."/>
            <person name="Batalov S."/>
            <person name="Forrest A.R."/>
            <person name="Zavolan M."/>
            <person name="Davis M.J."/>
            <person name="Wilming L.G."/>
            <person name="Aidinis V."/>
            <person name="Allen J.E."/>
            <person name="Ambesi-Impiombato A."/>
            <person name="Apweiler R."/>
            <person name="Aturaliya R.N."/>
            <person name="Bailey T.L."/>
            <person name="Bansal M."/>
            <person name="Baxter L."/>
            <person name="Beisel K.W."/>
            <person name="Bersano T."/>
            <person name="Bono H."/>
            <person name="Chalk A.M."/>
            <person name="Chiu K.P."/>
            <person name="Choudhary V."/>
            <person name="Christoffels A."/>
            <person name="Clutterbuck D.R."/>
            <person name="Crowe M.L."/>
            <person name="Dalla E."/>
            <person name="Dalrymple B.P."/>
            <person name="de Bono B."/>
            <person name="Della Gatta G."/>
            <person name="di Bernardo D."/>
            <person name="Down T."/>
            <person name="Engstrom P."/>
            <person name="Fagiolini M."/>
            <person name="Faulkner G."/>
            <person name="Fletcher C.F."/>
            <person name="Fukushima T."/>
            <person name="Furuno M."/>
            <person name="Futaki S."/>
            <person name="Gariboldi M."/>
            <person name="Georgii-Hemming P."/>
            <person name="Gingeras T.R."/>
            <person name="Gojobori T."/>
            <person name="Green R.E."/>
            <person name="Gustincich S."/>
            <person name="Harbers M."/>
            <person name="Hayashi Y."/>
            <person name="Hensch T.K."/>
            <person name="Hirokawa N."/>
            <person name="Hill D."/>
            <person name="Huminiecki L."/>
            <person name="Iacono M."/>
            <person name="Ikeo K."/>
            <person name="Iwama A."/>
            <person name="Ishikawa T."/>
            <person name="Jakt M."/>
            <person name="Kanapin A."/>
            <person name="Katoh M."/>
            <person name="Kawasawa Y."/>
            <person name="Kelso J."/>
            <person name="Kitamura H."/>
            <person name="Kitano H."/>
            <person name="Kollias G."/>
            <person name="Krishnan S.P."/>
            <person name="Kruger A."/>
            <person name="Kummerfeld S.K."/>
            <person name="Kurochkin I.V."/>
            <person name="Lareau L.F."/>
            <person name="Lazarevic D."/>
            <person name="Lipovich L."/>
            <person name="Liu J."/>
            <person name="Liuni S."/>
            <person name="McWilliam S."/>
            <person name="Madan Babu M."/>
            <person name="Madera M."/>
            <person name="Marchionni L."/>
            <person name="Matsuda H."/>
            <person name="Matsuzawa S."/>
            <person name="Miki H."/>
            <person name="Mignone F."/>
            <person name="Miyake S."/>
            <person name="Morris K."/>
            <person name="Mottagui-Tabar S."/>
            <person name="Mulder N."/>
            <person name="Nakano N."/>
            <person name="Nakauchi H."/>
            <person name="Ng P."/>
            <person name="Nilsson R."/>
            <person name="Nishiguchi S."/>
            <person name="Nishikawa S."/>
            <person name="Nori F."/>
            <person name="Ohara O."/>
            <person name="Okazaki Y."/>
            <person name="Orlando V."/>
            <person name="Pang K.C."/>
            <person name="Pavan W.J."/>
            <person name="Pavesi G."/>
            <person name="Pesole G."/>
            <person name="Petrovsky N."/>
            <person name="Piazza S."/>
            <person name="Reed J."/>
            <person name="Reid J.F."/>
            <person name="Ring B.Z."/>
            <person name="Ringwald M."/>
            <person name="Rost B."/>
            <person name="Ruan Y."/>
            <person name="Salzberg S.L."/>
            <person name="Sandelin A."/>
            <person name="Schneider C."/>
            <person name="Schoenbach C."/>
            <person name="Sekiguchi K."/>
            <person name="Semple C.A."/>
            <person name="Seno S."/>
            <person name="Sessa L."/>
            <person name="Sheng Y."/>
            <person name="Shibata Y."/>
            <person name="Shimada H."/>
            <person name="Shimada K."/>
            <person name="Silva D."/>
            <person name="Sinclair B."/>
            <person name="Sperling S."/>
            <person name="Stupka E."/>
            <person name="Sugiura K."/>
            <person name="Sultana R."/>
            <person name="Takenaka Y."/>
            <person name="Taki K."/>
            <person name="Tammoja K."/>
            <person name="Tan S.L."/>
            <person name="Tang S."/>
            <person name="Taylor M.S."/>
            <person name="Tegner J."/>
            <person name="Teichmann S.A."/>
            <person name="Ueda H.R."/>
            <person name="van Nimwegen E."/>
            <person name="Verardo R."/>
            <person name="Wei C.L."/>
            <person name="Yagi K."/>
            <person name="Yamanishi H."/>
            <person name="Zabarovsky E."/>
            <person name="Zhu S."/>
            <person name="Zimmer A."/>
            <person name="Hide W."/>
            <person name="Bult C."/>
            <person name="Grimmond S.M."/>
            <person name="Teasdale R.D."/>
            <person name="Liu E.T."/>
            <person name="Brusic V."/>
            <person name="Quackenbush J."/>
            <person name="Wahlestedt C."/>
            <person name="Mattick J.S."/>
            <person name="Hume D.A."/>
            <person name="Kai C."/>
            <person name="Sasaki D."/>
            <person name="Tomaru Y."/>
            <person name="Fukuda S."/>
            <person name="Kanamori-Katayama M."/>
            <person name="Suzuki M."/>
            <person name="Aoki J."/>
            <person name="Arakawa T."/>
            <person name="Iida J."/>
            <person name="Imamura K."/>
            <person name="Itoh M."/>
            <person name="Kato T."/>
            <person name="Kawaji H."/>
            <person name="Kawagashira N."/>
            <person name="Kawashima T."/>
            <person name="Kojima M."/>
            <person name="Kondo S."/>
            <person name="Konno H."/>
            <person name="Nakano K."/>
            <person name="Ninomiya N."/>
            <person name="Nishio T."/>
            <person name="Okada M."/>
            <person name="Plessy C."/>
            <person name="Shibata K."/>
            <person name="Shiraki T."/>
            <person name="Suzuki S."/>
            <person name="Tagami M."/>
            <person name="Waki K."/>
            <person name="Watahiki A."/>
            <person name="Okamura-Oho Y."/>
            <person name="Suzuki H."/>
            <person name="Kawai J."/>
            <person name="Hayashizaki Y."/>
        </authorList>
    </citation>
    <scope>NUCLEOTIDE SEQUENCE [LARGE SCALE MRNA]</scope>
    <source>
        <strain>C57BL/6J</strain>
        <tissue>Embryo</tissue>
        <tissue>Eye</tissue>
        <tissue>Head</tissue>
        <tissue>Testis</tissue>
    </source>
</reference>
<reference key="2">
    <citation type="journal article" date="2009" name="PLoS Biol.">
        <title>Lineage-specific biology revealed by a finished genome assembly of the mouse.</title>
        <authorList>
            <person name="Church D.M."/>
            <person name="Goodstadt L."/>
            <person name="Hillier L.W."/>
            <person name="Zody M.C."/>
            <person name="Goldstein S."/>
            <person name="She X."/>
            <person name="Bult C.J."/>
            <person name="Agarwala R."/>
            <person name="Cherry J.L."/>
            <person name="DiCuccio M."/>
            <person name="Hlavina W."/>
            <person name="Kapustin Y."/>
            <person name="Meric P."/>
            <person name="Maglott D."/>
            <person name="Birtle Z."/>
            <person name="Marques A.C."/>
            <person name="Graves T."/>
            <person name="Zhou S."/>
            <person name="Teague B."/>
            <person name="Potamousis K."/>
            <person name="Churas C."/>
            <person name="Place M."/>
            <person name="Herschleb J."/>
            <person name="Runnheim R."/>
            <person name="Forrest D."/>
            <person name="Amos-Landgraf J."/>
            <person name="Schwartz D.C."/>
            <person name="Cheng Z."/>
            <person name="Lindblad-Toh K."/>
            <person name="Eichler E.E."/>
            <person name="Ponting C.P."/>
        </authorList>
    </citation>
    <scope>NUCLEOTIDE SEQUENCE [LARGE SCALE GENOMIC DNA]</scope>
    <source>
        <strain>C57BL/6J</strain>
    </source>
</reference>
<reference key="3">
    <citation type="journal article" date="2006" name="Mol. Biol. Cell">
        <title>The intraflagellar transport protein IFT20 is associated with the Golgi complex and is required for cilia assembly.</title>
        <authorList>
            <person name="Follit J.A."/>
            <person name="Tuft R.A."/>
            <person name="Fogarty K.E."/>
            <person name="Pazour G.J."/>
        </authorList>
    </citation>
    <scope>IDENTIFICATION IN THE IFT COMPLEX B</scope>
    <scope>INTERACTION WITH IFT88</scope>
    <scope>SUBCELLULAR LOCATION</scope>
</reference>
<reference key="4">
    <citation type="journal article" date="2007" name="Science">
        <title>ATM and ATR substrate analysis reveals extensive protein networks responsive to DNA damage.</title>
        <authorList>
            <person name="Matsuoka S."/>
            <person name="Ballif B.A."/>
            <person name="Smogorzewska A."/>
            <person name="McDonald E.R. III"/>
            <person name="Hurov K.E."/>
            <person name="Luo J."/>
            <person name="Bakalarski C.E."/>
            <person name="Zhao Z."/>
            <person name="Solimini N."/>
            <person name="Lerenthal Y."/>
            <person name="Shiloh Y."/>
            <person name="Gygi S.P."/>
            <person name="Elledge S.J."/>
        </authorList>
    </citation>
    <scope>PHOSPHORYLATION [LARGE SCALE ANALYSIS] AT THR-73</scope>
    <scope>IDENTIFICATION BY MASS SPECTROMETRY [LARGE SCALE ANALYSIS]</scope>
    <source>
        <tissue>Embryonic fibroblast</tissue>
    </source>
</reference>
<reference key="5">
    <citation type="journal article" date="2010" name="Cell">
        <title>A tissue-specific atlas of mouse protein phosphorylation and expression.</title>
        <authorList>
            <person name="Huttlin E.L."/>
            <person name="Jedrychowski M.P."/>
            <person name="Elias J.E."/>
            <person name="Goswami T."/>
            <person name="Rad R."/>
            <person name="Beausoleil S.A."/>
            <person name="Villen J."/>
            <person name="Haas W."/>
            <person name="Sowa M.E."/>
            <person name="Gygi S.P."/>
        </authorList>
    </citation>
    <scope>IDENTIFICATION BY MASS SPECTROMETRY [LARGE SCALE ANALYSIS]</scope>
    <source>
        <tissue>Testis</tissue>
    </source>
</reference>
<reference key="6">
    <citation type="journal article" date="2013" name="Exp. Cell Res.">
        <title>Interaction of mouse TTC30/DYF-1 with multiple intraflagellar transport complex B proteins and KIF17.</title>
        <authorList>
            <person name="Howard P.W."/>
            <person name="Jue S.F."/>
            <person name="Maurer R.A."/>
        </authorList>
    </citation>
    <scope>IDENTIFICATION IN THE IFT COMPLEX B</scope>
    <scope>INTERACTION WITH IFT57 AND IFT70B</scope>
</reference>
<reference key="7">
    <citation type="journal article" date="2014" name="Mol. Cell. Proteomics">
        <title>Immunoaffinity enrichment and mass spectrometry analysis of protein methylation.</title>
        <authorList>
            <person name="Guo A."/>
            <person name="Gu H."/>
            <person name="Zhou J."/>
            <person name="Mulhern D."/>
            <person name="Wang Y."/>
            <person name="Lee K.A."/>
            <person name="Yang V."/>
            <person name="Aguiar M."/>
            <person name="Kornhauser J."/>
            <person name="Jia X."/>
            <person name="Ren J."/>
            <person name="Beausoleil S.A."/>
            <person name="Silva J.C."/>
            <person name="Vemulapalli V."/>
            <person name="Bedford M.T."/>
            <person name="Comb M.J."/>
        </authorList>
    </citation>
    <scope>METHYLATION [LARGE SCALE ANALYSIS] AT ARG-51</scope>
    <scope>IDENTIFICATION BY MASS SPECTROMETRY [LARGE SCALE ANALYSIS]</scope>
    <source>
        <tissue>Brain</tissue>
        <tissue>Embryo</tissue>
    </source>
</reference>
<reference key="8">
    <citation type="journal article" date="2019" name="Biol. Reprod.">
        <title>Intraflagellar transport protein 74 is essential for spermatogenesis and male fertility in mice.</title>
        <authorList>
            <person name="Shi L."/>
            <person name="Zhou T."/>
            <person name="Huang Q."/>
            <person name="Zhang S."/>
            <person name="Li W."/>
            <person name="Zhang L."/>
            <person name="Hess R.A."/>
            <person name="Pazour G.J."/>
            <person name="Zhang Z."/>
        </authorList>
    </citation>
    <scope>FUNCTION</scope>
    <scope>SUBCELLULAR LOCATION</scope>
    <scope>TISSUE SPECIFICITY</scope>
    <scope>DEVELOPMENTAL STAGE</scope>
</reference>
<sequence>MASNHKSSAPRPISRGGIGLTGRPPSGIRPPSGNVRVATAMPPTTARPGSRGGPLGTGGVLSSQIKVADRPVTQQGLSGMKTGMKGPQRQILDKSYYLGLLRSKISELTTEINKLQKEIEMYNQENSVYLSYEKRAETLAVEIKDFQGQLADYNMLVDKLNTNTEMEEVMSDYNMLKAQNDRETQSMDVIFTERQAKEKQIRSVEEEVEQEKQAADGIIKNMSPEKQVKYIEMKTTNEKLLQELDTLQQQLDSLNMKKESLETEIAHSQVKQEAVLLYEKLYELESHRDQMIAEDKSMGSPMEERERLLKQVKEDNQEIASMERQLTDIKEKINQFSEEIRQLDMDLEEHQGEMNQKYKELKKREENMDAFIETFEETKNQELERKAQIEASIITLLEHCSRNINRMKQISSITNQELKMMQDDLSFKSTEMQKSQTTARNLTSDSQRLQLDLQKMELLESKMTEEQQSLKNKIKQMTADLETYSDLAALKSSAEEKKKKLHQERTVLSTHRNAFKKIMEKLTSDYDTLKRQLQDNETHAQLTNLERKWQHLEQNNFVMKEFIATKSQESDYQPVIKNVMKQIAEYNKTIMDALHNASRS</sequence>